<dbReference type="EC" id="6.1.1.7" evidence="1"/>
<dbReference type="EMBL" id="AE009439">
    <property type="protein sequence ID" value="AAM02113.1"/>
    <property type="status" value="ALT_INIT"/>
    <property type="molecule type" value="Genomic_DNA"/>
</dbReference>
<dbReference type="RefSeq" id="WP_148679631.1">
    <property type="nucleotide sequence ID" value="NC_003551.1"/>
</dbReference>
<dbReference type="SMR" id="Q8TWY1"/>
<dbReference type="FunCoup" id="Q8TWY1">
    <property type="interactions" value="182"/>
</dbReference>
<dbReference type="STRING" id="190192.MK0900"/>
<dbReference type="PaxDb" id="190192-MK0900"/>
<dbReference type="EnsemblBacteria" id="AAM02113">
    <property type="protein sequence ID" value="AAM02113"/>
    <property type="gene ID" value="MK0900"/>
</dbReference>
<dbReference type="GeneID" id="1477001"/>
<dbReference type="KEGG" id="mka:MK0900"/>
<dbReference type="PATRIC" id="fig|190192.8.peg.942"/>
<dbReference type="HOGENOM" id="CLU_004485_4_0_2"/>
<dbReference type="InParanoid" id="Q8TWY1"/>
<dbReference type="OrthoDB" id="7506at2157"/>
<dbReference type="Proteomes" id="UP000001826">
    <property type="component" value="Chromosome"/>
</dbReference>
<dbReference type="GO" id="GO:0005737">
    <property type="term" value="C:cytoplasm"/>
    <property type="evidence" value="ECO:0007669"/>
    <property type="project" value="UniProtKB-SubCell"/>
</dbReference>
<dbReference type="GO" id="GO:0004813">
    <property type="term" value="F:alanine-tRNA ligase activity"/>
    <property type="evidence" value="ECO:0007669"/>
    <property type="project" value="UniProtKB-UniRule"/>
</dbReference>
<dbReference type="GO" id="GO:0002161">
    <property type="term" value="F:aminoacyl-tRNA deacylase activity"/>
    <property type="evidence" value="ECO:0007669"/>
    <property type="project" value="TreeGrafter"/>
</dbReference>
<dbReference type="GO" id="GO:0005524">
    <property type="term" value="F:ATP binding"/>
    <property type="evidence" value="ECO:0007669"/>
    <property type="project" value="UniProtKB-UniRule"/>
</dbReference>
<dbReference type="GO" id="GO:0000049">
    <property type="term" value="F:tRNA binding"/>
    <property type="evidence" value="ECO:0007669"/>
    <property type="project" value="UniProtKB-KW"/>
</dbReference>
<dbReference type="GO" id="GO:0008270">
    <property type="term" value="F:zinc ion binding"/>
    <property type="evidence" value="ECO:0007669"/>
    <property type="project" value="UniProtKB-UniRule"/>
</dbReference>
<dbReference type="GO" id="GO:0006419">
    <property type="term" value="P:alanyl-tRNA aminoacylation"/>
    <property type="evidence" value="ECO:0007669"/>
    <property type="project" value="UniProtKB-UniRule"/>
</dbReference>
<dbReference type="CDD" id="cd00673">
    <property type="entry name" value="AlaRS_core"/>
    <property type="match status" value="1"/>
</dbReference>
<dbReference type="FunFam" id="3.30.54.20:FF:000005">
    <property type="entry name" value="Alanine--tRNA ligase"/>
    <property type="match status" value="1"/>
</dbReference>
<dbReference type="FunFam" id="3.30.980.10:FF:000004">
    <property type="entry name" value="Alanine--tRNA ligase, cytoplasmic"/>
    <property type="match status" value="1"/>
</dbReference>
<dbReference type="Gene3D" id="2.40.30.130">
    <property type="match status" value="1"/>
</dbReference>
<dbReference type="Gene3D" id="3.10.310.40">
    <property type="match status" value="1"/>
</dbReference>
<dbReference type="Gene3D" id="3.30.54.20">
    <property type="match status" value="1"/>
</dbReference>
<dbReference type="Gene3D" id="6.10.250.550">
    <property type="match status" value="1"/>
</dbReference>
<dbReference type="Gene3D" id="3.30.930.10">
    <property type="entry name" value="Bira Bifunctional Protein, Domain 2"/>
    <property type="match status" value="1"/>
</dbReference>
<dbReference type="Gene3D" id="3.30.980.10">
    <property type="entry name" value="Threonyl-trna Synthetase, Chain A, domain 2"/>
    <property type="match status" value="1"/>
</dbReference>
<dbReference type="HAMAP" id="MF_00036_A">
    <property type="entry name" value="Ala_tRNA_synth_A"/>
    <property type="match status" value="1"/>
</dbReference>
<dbReference type="InterPro" id="IPR045864">
    <property type="entry name" value="aa-tRNA-synth_II/BPL/LPL"/>
</dbReference>
<dbReference type="InterPro" id="IPR002318">
    <property type="entry name" value="Ala-tRNA-lgiase_IIc"/>
</dbReference>
<dbReference type="InterPro" id="IPR018162">
    <property type="entry name" value="Ala-tRNA-ligase_IIc_anticod-bd"/>
</dbReference>
<dbReference type="InterPro" id="IPR018165">
    <property type="entry name" value="Ala-tRNA-synth_IIc_core"/>
</dbReference>
<dbReference type="InterPro" id="IPR018164">
    <property type="entry name" value="Ala-tRNA-synth_IIc_N"/>
</dbReference>
<dbReference type="InterPro" id="IPR022429">
    <property type="entry name" value="Ala-tRNA_lgiase_arc"/>
</dbReference>
<dbReference type="InterPro" id="IPR050058">
    <property type="entry name" value="Ala-tRNA_ligase"/>
</dbReference>
<dbReference type="InterPro" id="IPR018163">
    <property type="entry name" value="Thr/Ala-tRNA-synth_IIc_edit"/>
</dbReference>
<dbReference type="InterPro" id="IPR009000">
    <property type="entry name" value="Transl_B-barrel_sf"/>
</dbReference>
<dbReference type="InterPro" id="IPR012947">
    <property type="entry name" value="tRNA_SAD"/>
</dbReference>
<dbReference type="NCBIfam" id="TIGR03683">
    <property type="entry name" value="A-tRNA_syn_arch"/>
    <property type="match status" value="1"/>
</dbReference>
<dbReference type="NCBIfam" id="TIGR00344">
    <property type="entry name" value="alaS"/>
    <property type="match status" value="1"/>
</dbReference>
<dbReference type="PANTHER" id="PTHR11777:SF9">
    <property type="entry name" value="ALANINE--TRNA LIGASE, CYTOPLASMIC"/>
    <property type="match status" value="1"/>
</dbReference>
<dbReference type="PANTHER" id="PTHR11777">
    <property type="entry name" value="ALANYL-TRNA SYNTHETASE"/>
    <property type="match status" value="1"/>
</dbReference>
<dbReference type="Pfam" id="PF01411">
    <property type="entry name" value="tRNA-synt_2c"/>
    <property type="match status" value="1"/>
</dbReference>
<dbReference type="Pfam" id="PF07973">
    <property type="entry name" value="tRNA_SAD"/>
    <property type="match status" value="1"/>
</dbReference>
<dbReference type="PRINTS" id="PR00980">
    <property type="entry name" value="TRNASYNTHALA"/>
</dbReference>
<dbReference type="SMART" id="SM00863">
    <property type="entry name" value="tRNA_SAD"/>
    <property type="match status" value="1"/>
</dbReference>
<dbReference type="SUPFAM" id="SSF55681">
    <property type="entry name" value="Class II aaRS and biotin synthetases"/>
    <property type="match status" value="1"/>
</dbReference>
<dbReference type="SUPFAM" id="SSF101353">
    <property type="entry name" value="Putative anticodon-binding domain of alanyl-tRNA synthetase (AlaRS)"/>
    <property type="match status" value="1"/>
</dbReference>
<dbReference type="SUPFAM" id="SSF55186">
    <property type="entry name" value="ThrRS/AlaRS common domain"/>
    <property type="match status" value="1"/>
</dbReference>
<dbReference type="SUPFAM" id="SSF50447">
    <property type="entry name" value="Translation proteins"/>
    <property type="match status" value="1"/>
</dbReference>
<dbReference type="PROSITE" id="PS50860">
    <property type="entry name" value="AA_TRNA_LIGASE_II_ALA"/>
    <property type="match status" value="1"/>
</dbReference>
<reference key="1">
    <citation type="journal article" date="2002" name="Proc. Natl. Acad. Sci. U.S.A.">
        <title>The complete genome of hyperthermophile Methanopyrus kandleri AV19 and monophyly of archaeal methanogens.</title>
        <authorList>
            <person name="Slesarev A.I."/>
            <person name="Mezhevaya K.V."/>
            <person name="Makarova K.S."/>
            <person name="Polushin N.N."/>
            <person name="Shcherbinina O.V."/>
            <person name="Shakhova V.V."/>
            <person name="Belova G.I."/>
            <person name="Aravind L."/>
            <person name="Natale D.A."/>
            <person name="Rogozin I.B."/>
            <person name="Tatusov R.L."/>
            <person name="Wolf Y.I."/>
            <person name="Stetter K.O."/>
            <person name="Malykh A.G."/>
            <person name="Koonin E.V."/>
            <person name="Kozyavkin S.A."/>
        </authorList>
    </citation>
    <scope>NUCLEOTIDE SEQUENCE [LARGE SCALE GENOMIC DNA]</scope>
    <source>
        <strain>AV19 / DSM 6324 / JCM 9639 / NBRC 100938</strain>
    </source>
</reference>
<accession>Q8TWY1</accession>
<evidence type="ECO:0000255" key="1">
    <source>
        <dbReference type="HAMAP-Rule" id="MF_00036"/>
    </source>
</evidence>
<evidence type="ECO:0000256" key="2">
    <source>
        <dbReference type="SAM" id="MobiDB-lite"/>
    </source>
</evidence>
<evidence type="ECO:0000305" key="3"/>
<sequence length="915" mass="103908">MKVDPSEFELEFFEEIGFERKRCPECGEYFWGPPEAEVCNETPCVEYSFIGDPPASVKLDVWEAGEEFFRFFERHDHEVLDRYPVVARWRDDIHLTIASIACFQPWVTSGEVPPPANPLVINQPCIRLNDIDNVGRTGRHFTLFHMGGHHAFNNHPHDRRDIYWKEETVRLCYEFTVEKLGIPEEKIAFKESWWEGGGNAGPCFEVVVDGLELATLVFMQYEQVGGEYRELPQKIVDTGYGIERYAWITTGEPTAYDAVFGDLVDATARDLGVEIDGEAREILGELARVAGLMDVETESDLRVLRNRVARRLDLDVNELVRVAEPVEFVYGILDHARCLAFMLGDGVVPSNAGEGYLARLVIRRALRLLDGLDAEREYLLEVVERVLEDLRGTYPELAEREEYIQDALECEIDRYTRALKRGKKEVRKRLEEKGELSFEDLVELYDSHGIPPEVAREIAEDEGVEVEVPDDFYSRVAERHEGPEEVEEGLEELERIAVEEELPETELAFYDDEKRLEFKAEVIGTYEVNGDAWVVLDRTYFYPEGGGQEADRGTMRWKDGEAEVKDVQKVRGVVFHRIDGDVPPEGAEVECEVDGERRMRLTRNHTATHVILEAARRVLGDHVWQAGAHKSTDEARLDVTHHRRISDEELREIERLANEIVMKDLPVNKRFMDRNEAERRYGFELYQGGVVPGREIRVVEIEGWNVQACAGTHCDSTGEIGPIKIVGRERIQDGVERIRFAAGEAALERIWETEDLLRETCEVLRVNPENLPKTVKRFFEEWKEQRKRIERLERELVEAKLRAAPAEGRRVGDFTVTLVELEDVEVGSVAGTVEELVKEHENLVLVAKIVSNGSCQVVVGSGESAPPAGELMREIGKLIEGGGGGDERLAQGGGRNPDGLTEDRLVEIVEDLAGG</sequence>
<proteinExistence type="inferred from homology"/>
<feature type="chain" id="PRO_0000075265" description="Alanine--tRNA ligase">
    <location>
        <begin position="1"/>
        <end position="915"/>
    </location>
</feature>
<feature type="region of interest" description="Disordered" evidence="2">
    <location>
        <begin position="882"/>
        <end position="901"/>
    </location>
</feature>
<feature type="binding site" evidence="1">
    <location>
        <position position="605"/>
    </location>
    <ligand>
        <name>Zn(2+)</name>
        <dbReference type="ChEBI" id="CHEBI:29105"/>
    </ligand>
</feature>
<feature type="binding site" evidence="1">
    <location>
        <position position="609"/>
    </location>
    <ligand>
        <name>Zn(2+)</name>
        <dbReference type="ChEBI" id="CHEBI:29105"/>
    </ligand>
</feature>
<feature type="binding site" evidence="1">
    <location>
        <position position="709"/>
    </location>
    <ligand>
        <name>Zn(2+)</name>
        <dbReference type="ChEBI" id="CHEBI:29105"/>
    </ligand>
</feature>
<feature type="binding site" evidence="1">
    <location>
        <position position="713"/>
    </location>
    <ligand>
        <name>Zn(2+)</name>
        <dbReference type="ChEBI" id="CHEBI:29105"/>
    </ligand>
</feature>
<comment type="function">
    <text evidence="1">Catalyzes the attachment of alanine to tRNA(Ala) in a two-step reaction: alanine is first activated by ATP to form Ala-AMP and then transferred to the acceptor end of tRNA(Ala). Also edits incorrectly charged Ser-tRNA(Ala) and Gly-tRNA(Ala) via its editing domain.</text>
</comment>
<comment type="catalytic activity">
    <reaction evidence="1">
        <text>tRNA(Ala) + L-alanine + ATP = L-alanyl-tRNA(Ala) + AMP + diphosphate</text>
        <dbReference type="Rhea" id="RHEA:12540"/>
        <dbReference type="Rhea" id="RHEA-COMP:9657"/>
        <dbReference type="Rhea" id="RHEA-COMP:9923"/>
        <dbReference type="ChEBI" id="CHEBI:30616"/>
        <dbReference type="ChEBI" id="CHEBI:33019"/>
        <dbReference type="ChEBI" id="CHEBI:57972"/>
        <dbReference type="ChEBI" id="CHEBI:78442"/>
        <dbReference type="ChEBI" id="CHEBI:78497"/>
        <dbReference type="ChEBI" id="CHEBI:456215"/>
        <dbReference type="EC" id="6.1.1.7"/>
    </reaction>
</comment>
<comment type="cofactor">
    <cofactor evidence="1">
        <name>Zn(2+)</name>
        <dbReference type="ChEBI" id="CHEBI:29105"/>
    </cofactor>
    <text evidence="1">Binds 1 zinc ion per subunit.</text>
</comment>
<comment type="subcellular location">
    <subcellularLocation>
        <location evidence="1">Cytoplasm</location>
    </subcellularLocation>
</comment>
<comment type="domain">
    <text evidence="1">Consists of three domains; the N-terminal catalytic domain, the editing domain and the C-terminal C-Ala domain. The editing domain removes incorrectly charged amino acids, while the C-Ala domain, along with tRNA(Ala), serves as a bridge to cooperatively bring together the editing and aminoacylation centers thus stimulating deacylation of misacylated tRNAs.</text>
</comment>
<comment type="similarity">
    <text evidence="1">Belongs to the class-II aminoacyl-tRNA synthetase family.</text>
</comment>
<comment type="sequence caution" evidence="3">
    <conflict type="erroneous initiation">
        <sequence resource="EMBL-CDS" id="AAM02113"/>
    </conflict>
</comment>
<name>SYA_METKA</name>
<keyword id="KW-0030">Aminoacyl-tRNA synthetase</keyword>
<keyword id="KW-0067">ATP-binding</keyword>
<keyword id="KW-0963">Cytoplasm</keyword>
<keyword id="KW-0436">Ligase</keyword>
<keyword id="KW-0479">Metal-binding</keyword>
<keyword id="KW-0547">Nucleotide-binding</keyword>
<keyword id="KW-0648">Protein biosynthesis</keyword>
<keyword id="KW-1185">Reference proteome</keyword>
<keyword id="KW-0694">RNA-binding</keyword>
<keyword id="KW-0820">tRNA-binding</keyword>
<keyword id="KW-0862">Zinc</keyword>
<gene>
    <name evidence="1" type="primary">alaS</name>
    <name type="ordered locus">MK0900</name>
</gene>
<organism>
    <name type="scientific">Methanopyrus kandleri (strain AV19 / DSM 6324 / JCM 9639 / NBRC 100938)</name>
    <dbReference type="NCBI Taxonomy" id="190192"/>
    <lineage>
        <taxon>Archaea</taxon>
        <taxon>Methanobacteriati</taxon>
        <taxon>Methanobacteriota</taxon>
        <taxon>Methanomada group</taxon>
        <taxon>Methanopyri</taxon>
        <taxon>Methanopyrales</taxon>
        <taxon>Methanopyraceae</taxon>
        <taxon>Methanopyrus</taxon>
    </lineage>
</organism>
<protein>
    <recommendedName>
        <fullName evidence="1">Alanine--tRNA ligase</fullName>
        <ecNumber evidence="1">6.1.1.7</ecNumber>
    </recommendedName>
    <alternativeName>
        <fullName evidence="1">Alanyl-tRNA synthetase</fullName>
        <shortName evidence="1">AlaRS</shortName>
    </alternativeName>
</protein>